<feature type="peptide" id="PRO_0000345631" description="Dermorphin" evidence="3">
    <location>
        <begin position="1"/>
        <end position="7"/>
    </location>
</feature>
<feature type="modified residue" description="Hydroxyproline" evidence="3">
    <location>
        <position position="6"/>
    </location>
</feature>
<feature type="modified residue" description="Serine amide" evidence="3">
    <location>
        <position position="7"/>
    </location>
</feature>
<name>DEM_PITAZ</name>
<dbReference type="GO" id="GO:0005576">
    <property type="term" value="C:extracellular region"/>
    <property type="evidence" value="ECO:0007669"/>
    <property type="project" value="UniProtKB-SubCell"/>
</dbReference>
<dbReference type="GO" id="GO:0001515">
    <property type="term" value="F:opioid peptide activity"/>
    <property type="evidence" value="ECO:0007669"/>
    <property type="project" value="UniProtKB-KW"/>
</dbReference>
<dbReference type="GO" id="GO:0006952">
    <property type="term" value="P:defense response"/>
    <property type="evidence" value="ECO:0007669"/>
    <property type="project" value="UniProtKB-KW"/>
</dbReference>
<dbReference type="GO" id="GO:0007218">
    <property type="term" value="P:neuropeptide signaling pathway"/>
    <property type="evidence" value="ECO:0007669"/>
    <property type="project" value="UniProtKB-KW"/>
</dbReference>
<comment type="function">
    <text evidence="1">Dermorphin has a very potent opiate-like activity. It has high affinity and selectivity for mu-type opioid receptors (By similarity).</text>
</comment>
<comment type="subcellular location">
    <subcellularLocation>
        <location evidence="3">Secreted</location>
    </subcellularLocation>
</comment>
<comment type="tissue specificity">
    <text evidence="3">Expressed by the skin glands.</text>
</comment>
<comment type="mass spectrometry"/>
<comment type="similarity">
    <text evidence="2">Belongs to the frog skin active peptide (FSAP) family. Dermorphin subfamily.</text>
</comment>
<organism>
    <name type="scientific">Pithecopus azureus</name>
    <name type="common">Orange-legged monkey tree frog</name>
    <name type="synonym">Phyllomedusa azurea</name>
    <dbReference type="NCBI Taxonomy" id="2034991"/>
    <lineage>
        <taxon>Eukaryota</taxon>
        <taxon>Metazoa</taxon>
        <taxon>Chordata</taxon>
        <taxon>Craniata</taxon>
        <taxon>Vertebrata</taxon>
        <taxon>Euteleostomi</taxon>
        <taxon>Amphibia</taxon>
        <taxon>Batrachia</taxon>
        <taxon>Anura</taxon>
        <taxon>Neobatrachia</taxon>
        <taxon>Hyloidea</taxon>
        <taxon>Hylidae</taxon>
        <taxon>Phyllomedusinae</taxon>
        <taxon>Pithecopus</taxon>
    </lineage>
</organism>
<protein>
    <recommendedName>
        <fullName evidence="4">Dermorphin</fullName>
    </recommendedName>
</protein>
<sequence>YAFGYPS</sequence>
<accession>P85887</accession>
<proteinExistence type="evidence at protein level"/>
<reference key="1">
    <citation type="journal article" date="2007" name="J. Proteome Res.">
        <title>Amphibian skin secretomics: application of parallel quadrupole time-of-flight mass spectrometry and peptide precursor cDNA cloning to rapidly characterize the skin secretory peptidome of Phyllomedusa hypochondrialis azurea: discovery of a novel peptide family, the hyposins.</title>
        <authorList>
            <person name="Thompson A.H."/>
            <person name="Bjourson A.J."/>
            <person name="Orr D.F."/>
            <person name="Shaw C."/>
            <person name="McClean S."/>
        </authorList>
    </citation>
    <scope>PROTEIN SEQUENCE</scope>
    <scope>MASS SPECTROMETRY</scope>
    <scope>HYDROXYLATION AT PRO-6</scope>
    <scope>AMIDATION AT SER-7</scope>
    <scope>SUBCELLULAR LOCATION</scope>
    <source>
        <tissue>Skin secretion</tissue>
    </source>
</reference>
<evidence type="ECO:0000250" key="1">
    <source>
        <dbReference type="UniProtKB" id="P05422"/>
    </source>
</evidence>
<evidence type="ECO:0000255" key="2"/>
<evidence type="ECO:0000269" key="3">
    <source>
    </source>
</evidence>
<evidence type="ECO:0000303" key="4">
    <source>
    </source>
</evidence>
<keyword id="KW-0027">Amidation</keyword>
<keyword id="KW-0878">Amphibian defense peptide</keyword>
<keyword id="KW-0903">Direct protein sequencing</keyword>
<keyword id="KW-0257">Endorphin</keyword>
<keyword id="KW-0379">Hydroxylation</keyword>
<keyword id="KW-0555">Opioid peptide</keyword>
<keyword id="KW-0964">Secreted</keyword>